<evidence type="ECO:0000255" key="1">
    <source>
        <dbReference type="HAMAP-Rule" id="MF_00154"/>
    </source>
</evidence>
<keyword id="KW-0997">Cell inner membrane</keyword>
<keyword id="KW-1003">Cell membrane</keyword>
<keyword id="KW-0350">Heme biosynthesis</keyword>
<keyword id="KW-0472">Membrane</keyword>
<keyword id="KW-0808">Transferase</keyword>
<keyword id="KW-0812">Transmembrane</keyword>
<keyword id="KW-1133">Transmembrane helix</keyword>
<reference key="1">
    <citation type="journal article" date="2005" name="BMC Genomics">
        <title>Bacterial genome adaptation to niches: divergence of the potential virulence genes in three Burkholderia species of different survival strategies.</title>
        <authorList>
            <person name="Kim H.S."/>
            <person name="Schell M.A."/>
            <person name="Yu Y."/>
            <person name="Ulrich R.L."/>
            <person name="Sarria S.H."/>
            <person name="Nierman W.C."/>
            <person name="DeShazer D."/>
        </authorList>
    </citation>
    <scope>NUCLEOTIDE SEQUENCE [LARGE SCALE GENOMIC DNA]</scope>
    <source>
        <strain>ATCC 700388 / DSM 13276 / CCUG 48851 / CIP 106301 / E264</strain>
    </source>
</reference>
<sequence length="300" mass="32860">MDTTLSHTPGSRLSQYLALTKPRVTQLAVFCAVIGMFLATPGMVPWKVLLGGTVGIGLLAGSAFAINCLVEQKIDAMMRRTAWRPSARGEITTLQILAFSTVLGGLGAWTLYTFTNPLTMWLTIATFVGYAVIYTLLLKPMTPQNIVIGGASGAMPPALGWAAVTGAVPGDAWILVLIIFVWTPPHFWVLALYRRKDYENAGLPMLPVTHGEQFTRLHILLYTVILFAVTMMPFISGMSGAVYLTSAVLLGAIFLAYAWKIYRDYSDALARRAFRYSIVYLSLLFAALLVDHYARPVIGM</sequence>
<proteinExistence type="inferred from homology"/>
<comment type="function">
    <text evidence="1">Converts heme B (protoheme IX) to heme O by substitution of the vinyl group on carbon 2 of heme B porphyrin ring with a hydroxyethyl farnesyl side group.</text>
</comment>
<comment type="catalytic activity">
    <reaction evidence="1">
        <text>heme b + (2E,6E)-farnesyl diphosphate + H2O = Fe(II)-heme o + diphosphate</text>
        <dbReference type="Rhea" id="RHEA:28070"/>
        <dbReference type="ChEBI" id="CHEBI:15377"/>
        <dbReference type="ChEBI" id="CHEBI:33019"/>
        <dbReference type="ChEBI" id="CHEBI:60344"/>
        <dbReference type="ChEBI" id="CHEBI:60530"/>
        <dbReference type="ChEBI" id="CHEBI:175763"/>
        <dbReference type="EC" id="2.5.1.141"/>
    </reaction>
</comment>
<comment type="pathway">
    <text evidence="1">Porphyrin-containing compound metabolism; heme O biosynthesis; heme O from protoheme: step 1/1.</text>
</comment>
<comment type="subcellular location">
    <subcellularLocation>
        <location evidence="1">Cell inner membrane</location>
        <topology evidence="1">Multi-pass membrane protein</topology>
    </subcellularLocation>
</comment>
<comment type="miscellaneous">
    <text evidence="1">Carbon 2 of the heme B porphyrin ring is defined according to the Fischer nomenclature.</text>
</comment>
<comment type="similarity">
    <text evidence="1">Belongs to the UbiA prenyltransferase family. Protoheme IX farnesyltransferase subfamily.</text>
</comment>
<gene>
    <name evidence="1" type="primary">ctaB</name>
    <name type="ordered locus">BTH_I0435</name>
</gene>
<name>COXX_BURTA</name>
<dbReference type="EC" id="2.5.1.141" evidence="1"/>
<dbReference type="EMBL" id="CP000086">
    <property type="protein sequence ID" value="ABC39449.1"/>
    <property type="molecule type" value="Genomic_DNA"/>
</dbReference>
<dbReference type="SMR" id="Q2T1F6"/>
<dbReference type="GeneID" id="45120199"/>
<dbReference type="KEGG" id="bte:BTH_I0435"/>
<dbReference type="HOGENOM" id="CLU_029631_0_2_4"/>
<dbReference type="UniPathway" id="UPA00834">
    <property type="reaction ID" value="UER00712"/>
</dbReference>
<dbReference type="Proteomes" id="UP000001930">
    <property type="component" value="Chromosome I"/>
</dbReference>
<dbReference type="GO" id="GO:0005886">
    <property type="term" value="C:plasma membrane"/>
    <property type="evidence" value="ECO:0007669"/>
    <property type="project" value="UniProtKB-SubCell"/>
</dbReference>
<dbReference type="GO" id="GO:0008495">
    <property type="term" value="F:protoheme IX farnesyltransferase activity"/>
    <property type="evidence" value="ECO:0007669"/>
    <property type="project" value="UniProtKB-UniRule"/>
</dbReference>
<dbReference type="GO" id="GO:0048034">
    <property type="term" value="P:heme O biosynthetic process"/>
    <property type="evidence" value="ECO:0007669"/>
    <property type="project" value="UniProtKB-UniRule"/>
</dbReference>
<dbReference type="CDD" id="cd13957">
    <property type="entry name" value="PT_UbiA_Cox10"/>
    <property type="match status" value="1"/>
</dbReference>
<dbReference type="Gene3D" id="1.10.357.140">
    <property type="entry name" value="UbiA prenyltransferase"/>
    <property type="match status" value="1"/>
</dbReference>
<dbReference type="HAMAP" id="MF_00154">
    <property type="entry name" value="CyoE_CtaB"/>
    <property type="match status" value="1"/>
</dbReference>
<dbReference type="InterPro" id="IPR006369">
    <property type="entry name" value="Protohaem_IX_farnesylTrfase"/>
</dbReference>
<dbReference type="InterPro" id="IPR000537">
    <property type="entry name" value="UbiA_prenyltransferase"/>
</dbReference>
<dbReference type="InterPro" id="IPR030470">
    <property type="entry name" value="UbiA_prenylTrfase_CS"/>
</dbReference>
<dbReference type="InterPro" id="IPR044878">
    <property type="entry name" value="UbiA_sf"/>
</dbReference>
<dbReference type="NCBIfam" id="TIGR01473">
    <property type="entry name" value="cyoE_ctaB"/>
    <property type="match status" value="1"/>
</dbReference>
<dbReference type="NCBIfam" id="NF003349">
    <property type="entry name" value="PRK04375.1-2"/>
    <property type="match status" value="1"/>
</dbReference>
<dbReference type="PANTHER" id="PTHR43448:SF7">
    <property type="entry name" value="4-HYDROXYBENZOATE SOLANESYLTRANSFERASE"/>
    <property type="match status" value="1"/>
</dbReference>
<dbReference type="PANTHER" id="PTHR43448">
    <property type="entry name" value="PROTOHEME IX FARNESYLTRANSFERASE, MITOCHONDRIAL"/>
    <property type="match status" value="1"/>
</dbReference>
<dbReference type="Pfam" id="PF01040">
    <property type="entry name" value="UbiA"/>
    <property type="match status" value="1"/>
</dbReference>
<dbReference type="PROSITE" id="PS00943">
    <property type="entry name" value="UBIA"/>
    <property type="match status" value="1"/>
</dbReference>
<accession>Q2T1F6</accession>
<feature type="chain" id="PRO_0000327033" description="Protoheme IX farnesyltransferase">
    <location>
        <begin position="1"/>
        <end position="300"/>
    </location>
</feature>
<feature type="transmembrane region" description="Helical" evidence="1">
    <location>
        <begin position="24"/>
        <end position="44"/>
    </location>
</feature>
<feature type="transmembrane region" description="Helical" evidence="1">
    <location>
        <begin position="48"/>
        <end position="68"/>
    </location>
</feature>
<feature type="transmembrane region" description="Helical" evidence="1">
    <location>
        <begin position="94"/>
        <end position="114"/>
    </location>
</feature>
<feature type="transmembrane region" description="Helical" evidence="1">
    <location>
        <begin position="118"/>
        <end position="138"/>
    </location>
</feature>
<feature type="transmembrane region" description="Helical" evidence="1">
    <location>
        <begin position="146"/>
        <end position="166"/>
    </location>
</feature>
<feature type="transmembrane region" description="Helical" evidence="1">
    <location>
        <begin position="172"/>
        <end position="192"/>
    </location>
</feature>
<feature type="transmembrane region" description="Helical" evidence="1">
    <location>
        <begin position="217"/>
        <end position="237"/>
    </location>
</feature>
<feature type="transmembrane region" description="Helical" evidence="1">
    <location>
        <begin position="239"/>
        <end position="259"/>
    </location>
</feature>
<feature type="transmembrane region" description="Helical" evidence="1">
    <location>
        <begin position="278"/>
        <end position="298"/>
    </location>
</feature>
<protein>
    <recommendedName>
        <fullName evidence="1">Protoheme IX farnesyltransferase</fullName>
        <ecNumber evidence="1">2.5.1.141</ecNumber>
    </recommendedName>
    <alternativeName>
        <fullName evidence="1">Heme B farnesyltransferase</fullName>
    </alternativeName>
    <alternativeName>
        <fullName evidence="1">Heme O synthase</fullName>
    </alternativeName>
</protein>
<organism>
    <name type="scientific">Burkholderia thailandensis (strain ATCC 700388 / DSM 13276 / CCUG 48851 / CIP 106301 / E264)</name>
    <dbReference type="NCBI Taxonomy" id="271848"/>
    <lineage>
        <taxon>Bacteria</taxon>
        <taxon>Pseudomonadati</taxon>
        <taxon>Pseudomonadota</taxon>
        <taxon>Betaproteobacteria</taxon>
        <taxon>Burkholderiales</taxon>
        <taxon>Burkholderiaceae</taxon>
        <taxon>Burkholderia</taxon>
        <taxon>pseudomallei group</taxon>
    </lineage>
</organism>